<evidence type="ECO:0000255" key="1">
    <source>
        <dbReference type="HAMAP-Rule" id="MF_01719"/>
    </source>
</evidence>
<accession>Q1CG91</accession>
<accession>C4GW17</accession>
<feature type="chain" id="PRO_0000270450" description="Methionine import ATP-binding protein MetN 1">
    <location>
        <begin position="1"/>
        <end position="328"/>
    </location>
</feature>
<feature type="domain" description="ABC transporter" evidence="1">
    <location>
        <begin position="2"/>
        <end position="241"/>
    </location>
</feature>
<feature type="binding site" evidence="1">
    <location>
        <begin position="38"/>
        <end position="45"/>
    </location>
    <ligand>
        <name>ATP</name>
        <dbReference type="ChEBI" id="CHEBI:30616"/>
    </ligand>
</feature>
<dbReference type="EC" id="7.4.2.11" evidence="1"/>
<dbReference type="EMBL" id="CP000305">
    <property type="protein sequence ID" value="ABG18989.1"/>
    <property type="molecule type" value="Genomic_DNA"/>
</dbReference>
<dbReference type="EMBL" id="ACNQ01000017">
    <property type="protein sequence ID" value="EEO75117.1"/>
    <property type="molecule type" value="Genomic_DNA"/>
</dbReference>
<dbReference type="RefSeq" id="WP_002208776.1">
    <property type="nucleotide sequence ID" value="NZ_ACNQ01000017.1"/>
</dbReference>
<dbReference type="SMR" id="Q1CG91"/>
<dbReference type="KEGG" id="ypn:YPN_2661"/>
<dbReference type="HOGENOM" id="CLU_000604_1_3_6"/>
<dbReference type="Proteomes" id="UP000008936">
    <property type="component" value="Chromosome"/>
</dbReference>
<dbReference type="GO" id="GO:0005886">
    <property type="term" value="C:plasma membrane"/>
    <property type="evidence" value="ECO:0007669"/>
    <property type="project" value="UniProtKB-SubCell"/>
</dbReference>
<dbReference type="GO" id="GO:0033232">
    <property type="term" value="F:ABC-type D-methionine transporter activity"/>
    <property type="evidence" value="ECO:0007669"/>
    <property type="project" value="UniProtKB-EC"/>
</dbReference>
<dbReference type="GO" id="GO:0005524">
    <property type="term" value="F:ATP binding"/>
    <property type="evidence" value="ECO:0007669"/>
    <property type="project" value="UniProtKB-KW"/>
</dbReference>
<dbReference type="GO" id="GO:0016887">
    <property type="term" value="F:ATP hydrolysis activity"/>
    <property type="evidence" value="ECO:0007669"/>
    <property type="project" value="InterPro"/>
</dbReference>
<dbReference type="CDD" id="cd03258">
    <property type="entry name" value="ABC_MetN_methionine_transporter"/>
    <property type="match status" value="1"/>
</dbReference>
<dbReference type="FunFam" id="3.40.50.300:FF:000056">
    <property type="entry name" value="Cell division ATP-binding protein FtsE"/>
    <property type="match status" value="1"/>
</dbReference>
<dbReference type="Gene3D" id="3.30.70.260">
    <property type="match status" value="1"/>
</dbReference>
<dbReference type="Gene3D" id="3.40.50.300">
    <property type="entry name" value="P-loop containing nucleotide triphosphate hydrolases"/>
    <property type="match status" value="1"/>
</dbReference>
<dbReference type="InterPro" id="IPR003593">
    <property type="entry name" value="AAA+_ATPase"/>
</dbReference>
<dbReference type="InterPro" id="IPR003439">
    <property type="entry name" value="ABC_transporter-like_ATP-bd"/>
</dbReference>
<dbReference type="InterPro" id="IPR017871">
    <property type="entry name" value="ABC_transporter-like_CS"/>
</dbReference>
<dbReference type="InterPro" id="IPR045865">
    <property type="entry name" value="ACT-like_dom_sf"/>
</dbReference>
<dbReference type="InterPro" id="IPR041701">
    <property type="entry name" value="MetN_ABC"/>
</dbReference>
<dbReference type="InterPro" id="IPR050086">
    <property type="entry name" value="MetN_ABC_transporter-like"/>
</dbReference>
<dbReference type="InterPro" id="IPR018449">
    <property type="entry name" value="NIL_domain"/>
</dbReference>
<dbReference type="InterPro" id="IPR027417">
    <property type="entry name" value="P-loop_NTPase"/>
</dbReference>
<dbReference type="PANTHER" id="PTHR43166">
    <property type="entry name" value="AMINO ACID IMPORT ATP-BINDING PROTEIN"/>
    <property type="match status" value="1"/>
</dbReference>
<dbReference type="PANTHER" id="PTHR43166:SF30">
    <property type="entry name" value="METHIONINE IMPORT ATP-BINDING PROTEIN METN"/>
    <property type="match status" value="1"/>
</dbReference>
<dbReference type="Pfam" id="PF00005">
    <property type="entry name" value="ABC_tran"/>
    <property type="match status" value="1"/>
</dbReference>
<dbReference type="Pfam" id="PF09383">
    <property type="entry name" value="NIL"/>
    <property type="match status" value="1"/>
</dbReference>
<dbReference type="SMART" id="SM00382">
    <property type="entry name" value="AAA"/>
    <property type="match status" value="1"/>
</dbReference>
<dbReference type="SMART" id="SM00930">
    <property type="entry name" value="NIL"/>
    <property type="match status" value="1"/>
</dbReference>
<dbReference type="SUPFAM" id="SSF55021">
    <property type="entry name" value="ACT-like"/>
    <property type="match status" value="1"/>
</dbReference>
<dbReference type="SUPFAM" id="SSF52540">
    <property type="entry name" value="P-loop containing nucleoside triphosphate hydrolases"/>
    <property type="match status" value="1"/>
</dbReference>
<dbReference type="PROSITE" id="PS00211">
    <property type="entry name" value="ABC_TRANSPORTER_1"/>
    <property type="match status" value="1"/>
</dbReference>
<dbReference type="PROSITE" id="PS50893">
    <property type="entry name" value="ABC_TRANSPORTER_2"/>
    <property type="match status" value="1"/>
</dbReference>
<dbReference type="PROSITE" id="PS51264">
    <property type="entry name" value="METN"/>
    <property type="match status" value="1"/>
</dbReference>
<keyword id="KW-0029">Amino-acid transport</keyword>
<keyword id="KW-0067">ATP-binding</keyword>
<keyword id="KW-0997">Cell inner membrane</keyword>
<keyword id="KW-1003">Cell membrane</keyword>
<keyword id="KW-0472">Membrane</keyword>
<keyword id="KW-0547">Nucleotide-binding</keyword>
<keyword id="KW-1278">Translocase</keyword>
<keyword id="KW-0813">Transport</keyword>
<proteinExistence type="inferred from homology"/>
<sequence length="328" mass="35197">MISIERLSKTYPQGGLPMVALEEVSLEIPTGSVFGIVGRSGAGKSTLIRCLNLLERPTSGRIQVDGRELTTLSDRELRLQRQNIGMIFQNFHLLHSRNVWDNIAVGLEIIGMPKAQRQQRVAELLDLVGLSDKAYAFPSQLSGGQKQRVGIARALAAKPSYLLSDEATSALDPETTASILALLSDINRQLGLTIVLITHELDVVKSICDNAALLETGRVVETGAIADLLSDPLSRLGRSLLPTCGPLSVSATPRAELTFFDTLAASPVLSALAQQHAVGVTLLGGGVEFIGGQRVGRLHVDFNRPEGGLNLAEVLQFLNDRGVRAELI</sequence>
<gene>
    <name evidence="1" type="primary">metN1</name>
    <name type="ordered locus">YPN_2661</name>
    <name type="ORF">YP516_3004</name>
</gene>
<organism>
    <name type="scientific">Yersinia pestis bv. Antiqua (strain Nepal516)</name>
    <dbReference type="NCBI Taxonomy" id="377628"/>
    <lineage>
        <taxon>Bacteria</taxon>
        <taxon>Pseudomonadati</taxon>
        <taxon>Pseudomonadota</taxon>
        <taxon>Gammaproteobacteria</taxon>
        <taxon>Enterobacterales</taxon>
        <taxon>Yersiniaceae</taxon>
        <taxon>Yersinia</taxon>
    </lineage>
</organism>
<name>METN1_YERPN</name>
<comment type="function">
    <text evidence="1">Part of the ABC transporter complex MetNIQ involved in methionine import. Responsible for energy coupling to the transport system.</text>
</comment>
<comment type="catalytic activity">
    <reaction evidence="1">
        <text>L-methionine(out) + ATP + H2O = L-methionine(in) + ADP + phosphate + H(+)</text>
        <dbReference type="Rhea" id="RHEA:29779"/>
        <dbReference type="ChEBI" id="CHEBI:15377"/>
        <dbReference type="ChEBI" id="CHEBI:15378"/>
        <dbReference type="ChEBI" id="CHEBI:30616"/>
        <dbReference type="ChEBI" id="CHEBI:43474"/>
        <dbReference type="ChEBI" id="CHEBI:57844"/>
        <dbReference type="ChEBI" id="CHEBI:456216"/>
        <dbReference type="EC" id="7.4.2.11"/>
    </reaction>
</comment>
<comment type="catalytic activity">
    <reaction evidence="1">
        <text>D-methionine(out) + ATP + H2O = D-methionine(in) + ADP + phosphate + H(+)</text>
        <dbReference type="Rhea" id="RHEA:29767"/>
        <dbReference type="ChEBI" id="CHEBI:15377"/>
        <dbReference type="ChEBI" id="CHEBI:15378"/>
        <dbReference type="ChEBI" id="CHEBI:30616"/>
        <dbReference type="ChEBI" id="CHEBI:43474"/>
        <dbReference type="ChEBI" id="CHEBI:57932"/>
        <dbReference type="ChEBI" id="CHEBI:456216"/>
        <dbReference type="EC" id="7.4.2.11"/>
    </reaction>
</comment>
<comment type="subunit">
    <text evidence="1">The complex is composed of two ATP-binding proteins (MetN), two transmembrane proteins (MetI) and a solute-binding protein (MetQ).</text>
</comment>
<comment type="subcellular location">
    <subcellularLocation>
        <location evidence="1">Cell inner membrane</location>
        <topology evidence="1">Peripheral membrane protein</topology>
    </subcellularLocation>
</comment>
<comment type="similarity">
    <text evidence="1">Belongs to the ABC transporter superfamily. Methionine importer (TC 3.A.1.24) family.</text>
</comment>
<protein>
    <recommendedName>
        <fullName evidence="1">Methionine import ATP-binding protein MetN 1</fullName>
        <ecNumber evidence="1">7.4.2.11</ecNumber>
    </recommendedName>
</protein>
<reference key="1">
    <citation type="journal article" date="2006" name="J. Bacteriol.">
        <title>Complete genome sequence of Yersinia pestis strains Antiqua and Nepal516: evidence of gene reduction in an emerging pathogen.</title>
        <authorList>
            <person name="Chain P.S.G."/>
            <person name="Hu P."/>
            <person name="Malfatti S.A."/>
            <person name="Radnedge L."/>
            <person name="Larimer F."/>
            <person name="Vergez L.M."/>
            <person name="Worsham P."/>
            <person name="Chu M.C."/>
            <person name="Andersen G.L."/>
        </authorList>
    </citation>
    <scope>NUCLEOTIDE SEQUENCE [LARGE SCALE GENOMIC DNA]</scope>
    <source>
        <strain>Nepal516</strain>
    </source>
</reference>
<reference key="2">
    <citation type="submission" date="2009-04" db="EMBL/GenBank/DDBJ databases">
        <title>Yersinia pestis Nepal516A whole genome shotgun sequencing project.</title>
        <authorList>
            <person name="Plunkett G. III"/>
            <person name="Anderson B.D."/>
            <person name="Baumler D.J."/>
            <person name="Burland V."/>
            <person name="Cabot E.L."/>
            <person name="Glasner J.D."/>
            <person name="Mau B."/>
            <person name="Neeno-Eckwall E."/>
            <person name="Perna N.T."/>
            <person name="Munk A.C."/>
            <person name="Tapia R."/>
            <person name="Green L.D."/>
            <person name="Rogers Y.C."/>
            <person name="Detter J.C."/>
            <person name="Bruce D.C."/>
            <person name="Brettin T.S."/>
        </authorList>
    </citation>
    <scope>NUCLEOTIDE SEQUENCE [LARGE SCALE GENOMIC DNA]</scope>
    <source>
        <strain>Nepal516</strain>
    </source>
</reference>